<protein>
    <recommendedName>
        <fullName>F420-non-reducing hydrogenase vhu subunit A</fullName>
        <ecNumber>1.12.99.-</ecNumber>
    </recommendedName>
</protein>
<name>VHUA_METVO</name>
<accession>Q00407</accession>
<evidence type="ECO:0000250" key="1"/>
<evidence type="ECO:0000255" key="2"/>
<evidence type="ECO:0000305" key="3"/>
<organism>
    <name type="scientific">Methanococcus voltae</name>
    <dbReference type="NCBI Taxonomy" id="2188"/>
    <lineage>
        <taxon>Archaea</taxon>
        <taxon>Methanobacteriati</taxon>
        <taxon>Methanobacteriota</taxon>
        <taxon>Methanomada group</taxon>
        <taxon>Methanococci</taxon>
        <taxon>Methanococcales</taxon>
        <taxon>Methanococcaceae</taxon>
        <taxon>Methanococcus</taxon>
    </lineage>
</organism>
<gene>
    <name type="primary">vhuA</name>
</gene>
<keyword id="KW-0479">Metal-binding</keyword>
<keyword id="KW-0533">Nickel</keyword>
<keyword id="KW-0560">Oxidoreductase</keyword>
<feature type="chain" id="PRO_0000199731" description="F420-non-reducing hydrogenase vhu subunit A">
    <location>
        <begin position="1"/>
        <end position="420"/>
    </location>
</feature>
<feature type="binding site" evidence="2">
    <location>
        <position position="61"/>
    </location>
    <ligand>
        <name>Ni(2+)</name>
        <dbReference type="ChEBI" id="CHEBI:49786"/>
    </ligand>
</feature>
<feature type="binding site" evidence="2">
    <location>
        <position position="64"/>
    </location>
    <ligand>
        <name>Ni(2+)</name>
        <dbReference type="ChEBI" id="CHEBI:49786"/>
    </ligand>
</feature>
<sequence length="420" mass="46066">MGKITIAPLTRLEGHGKVTIKLDDSGKPADVKLHITALRGFEQFVIGRPAEEVPRIVPRICGICQTAHHLASVKAVDAAWGAQIPSAAEKQRELMHLGNMIHSHALHFYYLAAPDFVLGPDADPAIRNIVGVIDAAPEVAKKAIAMRRVGQSMVEATGGKPIHPVTGIPGGLSKSMSEEKRDELLAEIDTMIQYGQDGLDLMKSLNEKYLDTINSLGVIDTWYLGLVKDGKHNFYGDTLRFVSPDGSEKMEFKPAEYLDYLGEHVVEHSYVKYPYNKKVGYPEGLYRVGPLAMINVCDSMSTPLAEEARKEFAETFGRPANQSIAYNQARLIELLSACERAKELLEDPEIVSTDVKAEVEPKAGNGVGVVYAPRGTLFHNYETDDNGIVTKANMIVATTHNVPTMEKAIQQAAEVLFKDN</sequence>
<comment type="cofactor">
    <cofactor evidence="3">
        <name>Ni(2+)</name>
        <dbReference type="ChEBI" id="CHEBI:49786"/>
    </cofactor>
</comment>
<comment type="subunit">
    <text evidence="1">The F420-non-reducing hydrogenase vhu is composed of four subunits; VhuA, VhuD, VhuG and VhuU.</text>
</comment>
<comment type="miscellaneous">
    <text>The large subunit of Vhu is split into VhuA and VhuU. Each contributes two ligands to the [NiFeSe] center.</text>
</comment>
<comment type="similarity">
    <text evidence="3">Belongs to the [NiFe]/[NiFeSe] hydrogenase large subunit family.</text>
</comment>
<reference key="1">
    <citation type="journal article" date="1992" name="Mol. Gen. Genet.">
        <title>Methanococcus voltae harbors four gene clusters potentially encoding two [NiFe] and two [NiFeSe] hydrogenases, each of the cofactor F420-reducing or F420-non-reducing types.</title>
        <authorList>
            <person name="Halboth S."/>
            <person name="Klein A."/>
        </authorList>
    </citation>
    <scope>NUCLEOTIDE SEQUENCE [GENOMIC DNA]</scope>
    <source>
        <strain>ATCC 33273 / DSM 1537 / NBRC 100457 / OCM 70 / PS</strain>
    </source>
</reference>
<proteinExistence type="inferred from homology"/>
<dbReference type="EC" id="1.12.99.-"/>
<dbReference type="EMBL" id="X61204">
    <property type="protein sequence ID" value="CAA43510.1"/>
    <property type="molecule type" value="Genomic_DNA"/>
</dbReference>
<dbReference type="PIR" id="A59304">
    <property type="entry name" value="A59304"/>
</dbReference>
<dbReference type="SMR" id="Q00407"/>
<dbReference type="OrthoDB" id="42371at2157"/>
<dbReference type="GO" id="GO:0008901">
    <property type="term" value="F:ferredoxin hydrogenase activity"/>
    <property type="evidence" value="ECO:0007669"/>
    <property type="project" value="InterPro"/>
</dbReference>
<dbReference type="GO" id="GO:0016151">
    <property type="term" value="F:nickel cation binding"/>
    <property type="evidence" value="ECO:0007669"/>
    <property type="project" value="InterPro"/>
</dbReference>
<dbReference type="Gene3D" id="1.10.645.10">
    <property type="entry name" value="Cytochrome-c3 Hydrogenase, chain B"/>
    <property type="match status" value="1"/>
</dbReference>
<dbReference type="InterPro" id="IPR001501">
    <property type="entry name" value="Ni-dep_hyd_lsu"/>
</dbReference>
<dbReference type="InterPro" id="IPR018194">
    <property type="entry name" value="Ni-dep_hyd_lsu_Ni_BS"/>
</dbReference>
<dbReference type="InterPro" id="IPR029014">
    <property type="entry name" value="NiFe-Hase_large"/>
</dbReference>
<dbReference type="InterPro" id="IPR053511">
    <property type="entry name" value="NiFe/NiFeSe_hydrogenase_LSU"/>
</dbReference>
<dbReference type="NCBIfam" id="NF041785">
    <property type="entry name" value="VhuA"/>
    <property type="match status" value="1"/>
</dbReference>
<dbReference type="PANTHER" id="PTHR43600">
    <property type="entry name" value="COENZYME F420 HYDROGENASE, SUBUNIT ALPHA"/>
    <property type="match status" value="1"/>
</dbReference>
<dbReference type="PANTHER" id="PTHR43600:SF2">
    <property type="entry name" value="F420-NON-REDUCING HYDROGENASE VHU SUBUNIT A"/>
    <property type="match status" value="1"/>
</dbReference>
<dbReference type="Pfam" id="PF00374">
    <property type="entry name" value="NiFeSe_Hases"/>
    <property type="match status" value="2"/>
</dbReference>
<dbReference type="SUPFAM" id="SSF56762">
    <property type="entry name" value="HydB/Nqo4-like"/>
    <property type="match status" value="1"/>
</dbReference>
<dbReference type="PROSITE" id="PS00507">
    <property type="entry name" value="NI_HGENASE_L_1"/>
    <property type="match status" value="1"/>
</dbReference>